<dbReference type="EC" id="7.1.1.-" evidence="1"/>
<dbReference type="EMBL" id="AM743169">
    <property type="protein sequence ID" value="CAQ46831.1"/>
    <property type="molecule type" value="Genomic_DNA"/>
</dbReference>
<dbReference type="RefSeq" id="WP_005410462.1">
    <property type="nucleotide sequence ID" value="NC_010943.1"/>
</dbReference>
<dbReference type="SMR" id="B2FNX7"/>
<dbReference type="EnsemblBacteria" id="CAQ46831">
    <property type="protein sequence ID" value="CAQ46831"/>
    <property type="gene ID" value="Smlt3403"/>
</dbReference>
<dbReference type="KEGG" id="sml:Smlt3403"/>
<dbReference type="eggNOG" id="COG0852">
    <property type="taxonomic scope" value="Bacteria"/>
</dbReference>
<dbReference type="HOGENOM" id="CLU_042628_2_1_6"/>
<dbReference type="Proteomes" id="UP000008840">
    <property type="component" value="Chromosome"/>
</dbReference>
<dbReference type="GO" id="GO:0005886">
    <property type="term" value="C:plasma membrane"/>
    <property type="evidence" value="ECO:0007669"/>
    <property type="project" value="UniProtKB-SubCell"/>
</dbReference>
<dbReference type="GO" id="GO:0008137">
    <property type="term" value="F:NADH dehydrogenase (ubiquinone) activity"/>
    <property type="evidence" value="ECO:0007669"/>
    <property type="project" value="InterPro"/>
</dbReference>
<dbReference type="GO" id="GO:0050136">
    <property type="term" value="F:NADH:ubiquinone reductase (non-electrogenic) activity"/>
    <property type="evidence" value="ECO:0007669"/>
    <property type="project" value="UniProtKB-UniRule"/>
</dbReference>
<dbReference type="GO" id="GO:0048038">
    <property type="term" value="F:quinone binding"/>
    <property type="evidence" value="ECO:0007669"/>
    <property type="project" value="UniProtKB-KW"/>
</dbReference>
<dbReference type="Gene3D" id="3.30.460.80">
    <property type="entry name" value="NADH:ubiquinone oxidoreductase, 30kDa subunit"/>
    <property type="match status" value="1"/>
</dbReference>
<dbReference type="HAMAP" id="MF_01357">
    <property type="entry name" value="NDH1_NuoC"/>
    <property type="match status" value="1"/>
</dbReference>
<dbReference type="InterPro" id="IPR010218">
    <property type="entry name" value="NADH_DH_suC"/>
</dbReference>
<dbReference type="InterPro" id="IPR037232">
    <property type="entry name" value="NADH_quin_OxRdtase_su_C/D-like"/>
</dbReference>
<dbReference type="InterPro" id="IPR001268">
    <property type="entry name" value="NADH_UbQ_OxRdtase_30kDa_su"/>
</dbReference>
<dbReference type="InterPro" id="IPR020396">
    <property type="entry name" value="NADH_UbQ_OxRdtase_CS"/>
</dbReference>
<dbReference type="NCBIfam" id="NF004730">
    <property type="entry name" value="PRK06074.1-1"/>
    <property type="match status" value="1"/>
</dbReference>
<dbReference type="NCBIfam" id="NF004732">
    <property type="entry name" value="PRK06074.1-4"/>
    <property type="match status" value="1"/>
</dbReference>
<dbReference type="PANTHER" id="PTHR10884:SF14">
    <property type="entry name" value="NADH DEHYDROGENASE [UBIQUINONE] IRON-SULFUR PROTEIN 3, MITOCHONDRIAL"/>
    <property type="match status" value="1"/>
</dbReference>
<dbReference type="PANTHER" id="PTHR10884">
    <property type="entry name" value="NADH DEHYDROGENASE UBIQUINONE IRON-SULFUR PROTEIN 3"/>
    <property type="match status" value="1"/>
</dbReference>
<dbReference type="Pfam" id="PF00329">
    <property type="entry name" value="Complex1_30kDa"/>
    <property type="match status" value="1"/>
</dbReference>
<dbReference type="SUPFAM" id="SSF143243">
    <property type="entry name" value="Nqo5-like"/>
    <property type="match status" value="1"/>
</dbReference>
<dbReference type="PROSITE" id="PS00542">
    <property type="entry name" value="COMPLEX1_30K"/>
    <property type="match status" value="1"/>
</dbReference>
<organism>
    <name type="scientific">Stenotrophomonas maltophilia (strain K279a)</name>
    <dbReference type="NCBI Taxonomy" id="522373"/>
    <lineage>
        <taxon>Bacteria</taxon>
        <taxon>Pseudomonadati</taxon>
        <taxon>Pseudomonadota</taxon>
        <taxon>Gammaproteobacteria</taxon>
        <taxon>Lysobacterales</taxon>
        <taxon>Lysobacteraceae</taxon>
        <taxon>Stenotrophomonas</taxon>
        <taxon>Stenotrophomonas maltophilia group</taxon>
    </lineage>
</organism>
<feature type="chain" id="PRO_0000358200" description="NADH-quinone oxidoreductase subunit C">
    <location>
        <begin position="1"/>
        <end position="249"/>
    </location>
</feature>
<protein>
    <recommendedName>
        <fullName evidence="1">NADH-quinone oxidoreductase subunit C</fullName>
        <ecNumber evidence="1">7.1.1.-</ecNumber>
    </recommendedName>
    <alternativeName>
        <fullName evidence="1">NADH dehydrogenase I subunit C</fullName>
    </alternativeName>
    <alternativeName>
        <fullName evidence="1">NDH-1 subunit C</fullName>
    </alternativeName>
</protein>
<gene>
    <name evidence="1" type="primary">nuoC</name>
    <name type="ordered locus">Smlt3403</name>
</gene>
<proteinExistence type="inferred from homology"/>
<accession>B2FNX7</accession>
<comment type="function">
    <text evidence="1">NDH-1 shuttles electrons from NADH, via FMN and iron-sulfur (Fe-S) centers, to quinones in the respiratory chain. The immediate electron acceptor for the enzyme in this species is believed to be ubiquinone. Couples the redox reaction to proton translocation (for every two electrons transferred, four hydrogen ions are translocated across the cytoplasmic membrane), and thus conserves the redox energy in a proton gradient.</text>
</comment>
<comment type="catalytic activity">
    <reaction evidence="1">
        <text>a quinone + NADH + 5 H(+)(in) = a quinol + NAD(+) + 4 H(+)(out)</text>
        <dbReference type="Rhea" id="RHEA:57888"/>
        <dbReference type="ChEBI" id="CHEBI:15378"/>
        <dbReference type="ChEBI" id="CHEBI:24646"/>
        <dbReference type="ChEBI" id="CHEBI:57540"/>
        <dbReference type="ChEBI" id="CHEBI:57945"/>
        <dbReference type="ChEBI" id="CHEBI:132124"/>
    </reaction>
</comment>
<comment type="subunit">
    <text evidence="1">NDH-1 is composed of 14 different subunits. Subunits NuoB, C, D, E, F, and G constitute the peripheral sector of the complex.</text>
</comment>
<comment type="subcellular location">
    <subcellularLocation>
        <location evidence="1">Cell membrane</location>
        <topology evidence="1">Peripheral membrane protein</topology>
        <orientation evidence="1">Cytoplasmic side</orientation>
    </subcellularLocation>
</comment>
<comment type="similarity">
    <text evidence="1">Belongs to the complex I 30 kDa subunit family.</text>
</comment>
<name>NUOC_STRMK</name>
<reference key="1">
    <citation type="journal article" date="2008" name="Genome Biol.">
        <title>The complete genome, comparative and functional analysis of Stenotrophomonas maltophilia reveals an organism heavily shielded by drug resistance determinants.</title>
        <authorList>
            <person name="Crossman L.C."/>
            <person name="Gould V.C."/>
            <person name="Dow J.M."/>
            <person name="Vernikos G.S."/>
            <person name="Okazaki A."/>
            <person name="Sebaihia M."/>
            <person name="Saunders D."/>
            <person name="Arrowsmith C."/>
            <person name="Carver T."/>
            <person name="Peters N."/>
            <person name="Adlem E."/>
            <person name="Kerhornou A."/>
            <person name="Lord A."/>
            <person name="Murphy L."/>
            <person name="Seeger K."/>
            <person name="Squares R."/>
            <person name="Rutter S."/>
            <person name="Quail M.A."/>
            <person name="Rajandream M.A."/>
            <person name="Harris D."/>
            <person name="Churcher C."/>
            <person name="Bentley S.D."/>
            <person name="Parkhill J."/>
            <person name="Thomson N.R."/>
            <person name="Avison M.B."/>
        </authorList>
    </citation>
    <scope>NUCLEOTIDE SEQUENCE [LARGE SCALE GENOMIC DNA]</scope>
    <source>
        <strain>K279a</strain>
    </source>
</reference>
<keyword id="KW-1003">Cell membrane</keyword>
<keyword id="KW-0472">Membrane</keyword>
<keyword id="KW-0520">NAD</keyword>
<keyword id="KW-0874">Quinone</keyword>
<keyword id="KW-1185">Reference proteome</keyword>
<keyword id="KW-1278">Translocase</keyword>
<keyword id="KW-0813">Transport</keyword>
<keyword id="KW-0830">Ubiquinone</keyword>
<sequence>MAEQASFIDRLSARFAGAKVIVVEPRGEVTLEVPAAEWHATALALRDEFGFEQAVDLCGVDYLGYGSDEWDTADVSSQGFSRGVEGKAQGRFAWGEFPTEENGADGARPQHMPTQRFAVVAQLRSYQHNLMMHLRCFAPDEALPVVSSLTGIWPGLNWFEREAFDLYGVIFEGHPDLRRILTDYGFVGHPFRKDFPLIGNVEVRYDEEKKRVIYEPVTSVEPRVGVPRVIRDDARLQTAEGERAQEAVK</sequence>
<evidence type="ECO:0000255" key="1">
    <source>
        <dbReference type="HAMAP-Rule" id="MF_01357"/>
    </source>
</evidence>